<protein>
    <recommendedName>
        <fullName evidence="1">PKHD-type hydroxylase YbiX</fullName>
        <ecNumber evidence="1">1.14.11.-</ecNumber>
    </recommendedName>
</protein>
<comment type="cofactor">
    <cofactor evidence="1">
        <name>Fe(2+)</name>
        <dbReference type="ChEBI" id="CHEBI:29033"/>
    </cofactor>
    <text evidence="1">Binds 1 Fe(2+) ion per subunit.</text>
</comment>
<comment type="cofactor">
    <cofactor evidence="1">
        <name>L-ascorbate</name>
        <dbReference type="ChEBI" id="CHEBI:38290"/>
    </cofactor>
</comment>
<sequence length="225" mass="25509">MMYHIPGVLSPQDVARFREHLEQAEWVDGRVTTGAQGAQVKNNQQVDTRSALYAALQNEVLNAVNQHALFFAAALPRTLSTPLFNRYQNNETYGFHVDGAVRSHPQNGWMRTDLSATLFLSDPESYDGGELVVNDTFGQHRVKLPAGDLVLYPSSSLHCVTPVTRGVRVASFMWIQSMIRDDKKRAMLFELDNNIQSLKSRYGESEEILSLLNLYHNLLREWSEI</sequence>
<feature type="chain" id="PRO_1000147526" description="PKHD-type hydroxylase YbiX">
    <location>
        <begin position="1"/>
        <end position="225"/>
    </location>
</feature>
<feature type="domain" description="Fe2OG dioxygenase" evidence="1">
    <location>
        <begin position="78"/>
        <end position="177"/>
    </location>
</feature>
<feature type="binding site" evidence="1">
    <location>
        <position position="96"/>
    </location>
    <ligand>
        <name>Fe cation</name>
        <dbReference type="ChEBI" id="CHEBI:24875"/>
    </ligand>
</feature>
<feature type="binding site" evidence="1">
    <location>
        <position position="98"/>
    </location>
    <ligand>
        <name>Fe cation</name>
        <dbReference type="ChEBI" id="CHEBI:24875"/>
    </ligand>
</feature>
<feature type="binding site" evidence="1">
    <location>
        <position position="158"/>
    </location>
    <ligand>
        <name>Fe cation</name>
        <dbReference type="ChEBI" id="CHEBI:24875"/>
    </ligand>
</feature>
<feature type="binding site" evidence="1">
    <location>
        <position position="168"/>
    </location>
    <ligand>
        <name>2-oxoglutarate</name>
        <dbReference type="ChEBI" id="CHEBI:16810"/>
    </ligand>
</feature>
<organism>
    <name type="scientific">Escherichia coli O81 (strain ED1a)</name>
    <dbReference type="NCBI Taxonomy" id="585397"/>
    <lineage>
        <taxon>Bacteria</taxon>
        <taxon>Pseudomonadati</taxon>
        <taxon>Pseudomonadota</taxon>
        <taxon>Gammaproteobacteria</taxon>
        <taxon>Enterobacterales</taxon>
        <taxon>Enterobacteriaceae</taxon>
        <taxon>Escherichia</taxon>
    </lineage>
</organism>
<keyword id="KW-0223">Dioxygenase</keyword>
<keyword id="KW-0408">Iron</keyword>
<keyword id="KW-0479">Metal-binding</keyword>
<keyword id="KW-0560">Oxidoreductase</keyword>
<keyword id="KW-0847">Vitamin C</keyword>
<name>YBIX_ECO81</name>
<dbReference type="EC" id="1.14.11.-" evidence="1"/>
<dbReference type="EMBL" id="CU928162">
    <property type="protein sequence ID" value="CAR06974.1"/>
    <property type="molecule type" value="Genomic_DNA"/>
</dbReference>
<dbReference type="RefSeq" id="WP_000990159.1">
    <property type="nucleotide sequence ID" value="NC_011745.1"/>
</dbReference>
<dbReference type="SMR" id="B7MQQ8"/>
<dbReference type="KEGG" id="ecq:ECED1_0769"/>
<dbReference type="HOGENOM" id="CLU_106663_0_0_6"/>
<dbReference type="Proteomes" id="UP000000748">
    <property type="component" value="Chromosome"/>
</dbReference>
<dbReference type="GO" id="GO:0016706">
    <property type="term" value="F:2-oxoglutarate-dependent dioxygenase activity"/>
    <property type="evidence" value="ECO:0007669"/>
    <property type="project" value="UniProtKB-UniRule"/>
</dbReference>
<dbReference type="GO" id="GO:0005506">
    <property type="term" value="F:iron ion binding"/>
    <property type="evidence" value="ECO:0007669"/>
    <property type="project" value="UniProtKB-UniRule"/>
</dbReference>
<dbReference type="GO" id="GO:0031418">
    <property type="term" value="F:L-ascorbic acid binding"/>
    <property type="evidence" value="ECO:0007669"/>
    <property type="project" value="UniProtKB-KW"/>
</dbReference>
<dbReference type="GO" id="GO:0006974">
    <property type="term" value="P:DNA damage response"/>
    <property type="evidence" value="ECO:0007669"/>
    <property type="project" value="TreeGrafter"/>
</dbReference>
<dbReference type="GO" id="GO:0006879">
    <property type="term" value="P:intracellular iron ion homeostasis"/>
    <property type="evidence" value="ECO:0007669"/>
    <property type="project" value="TreeGrafter"/>
</dbReference>
<dbReference type="FunFam" id="2.60.120.620:FF:000006">
    <property type="entry name" value="PKHD-type hydroxylase YbiX"/>
    <property type="match status" value="1"/>
</dbReference>
<dbReference type="FunFam" id="4.10.860.20:FF:000001">
    <property type="entry name" value="PKHD-type hydroxylase YbiX"/>
    <property type="match status" value="1"/>
</dbReference>
<dbReference type="Gene3D" id="2.60.120.620">
    <property type="entry name" value="q2cbj1_9rhob like domain"/>
    <property type="match status" value="1"/>
</dbReference>
<dbReference type="Gene3D" id="4.10.860.20">
    <property type="entry name" value="Rabenosyn, Rab binding domain"/>
    <property type="match status" value="1"/>
</dbReference>
<dbReference type="HAMAP" id="MF_00657">
    <property type="entry name" value="Hydroxyl_YbiX"/>
    <property type="match status" value="1"/>
</dbReference>
<dbReference type="InterPro" id="IPR005123">
    <property type="entry name" value="Oxoglu/Fe-dep_dioxygenase_dom"/>
</dbReference>
<dbReference type="InterPro" id="IPR041097">
    <property type="entry name" value="PKHD_C"/>
</dbReference>
<dbReference type="InterPro" id="IPR023550">
    <property type="entry name" value="PKHD_hydroxylase"/>
</dbReference>
<dbReference type="InterPro" id="IPR006620">
    <property type="entry name" value="Pro_4_hyd_alph"/>
</dbReference>
<dbReference type="InterPro" id="IPR044862">
    <property type="entry name" value="Pro_4_hyd_alph_FE2OG_OXY"/>
</dbReference>
<dbReference type="NCBIfam" id="NF003972">
    <property type="entry name" value="PRK05467.1-1"/>
    <property type="match status" value="1"/>
</dbReference>
<dbReference type="NCBIfam" id="NF003974">
    <property type="entry name" value="PRK05467.1-3"/>
    <property type="match status" value="1"/>
</dbReference>
<dbReference type="NCBIfam" id="NF003975">
    <property type="entry name" value="PRK05467.1-4"/>
    <property type="match status" value="1"/>
</dbReference>
<dbReference type="PANTHER" id="PTHR41536">
    <property type="entry name" value="PKHD-TYPE HYDROXYLASE YBIX"/>
    <property type="match status" value="1"/>
</dbReference>
<dbReference type="PANTHER" id="PTHR41536:SF1">
    <property type="entry name" value="PKHD-TYPE HYDROXYLASE YBIX"/>
    <property type="match status" value="1"/>
</dbReference>
<dbReference type="Pfam" id="PF13640">
    <property type="entry name" value="2OG-FeII_Oxy_3"/>
    <property type="match status" value="1"/>
</dbReference>
<dbReference type="Pfam" id="PF18331">
    <property type="entry name" value="PKHD_C"/>
    <property type="match status" value="1"/>
</dbReference>
<dbReference type="SMART" id="SM00702">
    <property type="entry name" value="P4Hc"/>
    <property type="match status" value="1"/>
</dbReference>
<dbReference type="SUPFAM" id="SSF51197">
    <property type="entry name" value="Clavaminate synthase-like"/>
    <property type="match status" value="1"/>
</dbReference>
<dbReference type="PROSITE" id="PS51471">
    <property type="entry name" value="FE2OG_OXY"/>
    <property type="match status" value="1"/>
</dbReference>
<gene>
    <name evidence="1" type="primary">ybiX</name>
    <name type="ordered locus">ECED1_0769</name>
</gene>
<reference key="1">
    <citation type="journal article" date="2009" name="PLoS Genet.">
        <title>Organised genome dynamics in the Escherichia coli species results in highly diverse adaptive paths.</title>
        <authorList>
            <person name="Touchon M."/>
            <person name="Hoede C."/>
            <person name="Tenaillon O."/>
            <person name="Barbe V."/>
            <person name="Baeriswyl S."/>
            <person name="Bidet P."/>
            <person name="Bingen E."/>
            <person name="Bonacorsi S."/>
            <person name="Bouchier C."/>
            <person name="Bouvet O."/>
            <person name="Calteau A."/>
            <person name="Chiapello H."/>
            <person name="Clermont O."/>
            <person name="Cruveiller S."/>
            <person name="Danchin A."/>
            <person name="Diard M."/>
            <person name="Dossat C."/>
            <person name="Karoui M.E."/>
            <person name="Frapy E."/>
            <person name="Garry L."/>
            <person name="Ghigo J.M."/>
            <person name="Gilles A.M."/>
            <person name="Johnson J."/>
            <person name="Le Bouguenec C."/>
            <person name="Lescat M."/>
            <person name="Mangenot S."/>
            <person name="Martinez-Jehanne V."/>
            <person name="Matic I."/>
            <person name="Nassif X."/>
            <person name="Oztas S."/>
            <person name="Petit M.A."/>
            <person name="Pichon C."/>
            <person name="Rouy Z."/>
            <person name="Ruf C.S."/>
            <person name="Schneider D."/>
            <person name="Tourret J."/>
            <person name="Vacherie B."/>
            <person name="Vallenet D."/>
            <person name="Medigue C."/>
            <person name="Rocha E.P.C."/>
            <person name="Denamur E."/>
        </authorList>
    </citation>
    <scope>NUCLEOTIDE SEQUENCE [LARGE SCALE GENOMIC DNA]</scope>
    <source>
        <strain>ED1a</strain>
    </source>
</reference>
<accession>B7MQQ8</accession>
<evidence type="ECO:0000255" key="1">
    <source>
        <dbReference type="HAMAP-Rule" id="MF_00657"/>
    </source>
</evidence>
<proteinExistence type="inferred from homology"/>